<organism>
    <name type="scientific">Fischerella muscicola</name>
    <dbReference type="NCBI Taxonomy" id="92938"/>
    <lineage>
        <taxon>Bacteria</taxon>
        <taxon>Bacillati</taxon>
        <taxon>Cyanobacteriota</taxon>
        <taxon>Cyanophyceae</taxon>
        <taxon>Nostocales</taxon>
        <taxon>Hapalosiphonaceae</taxon>
        <taxon>Fischerella</taxon>
    </lineage>
</organism>
<dbReference type="EMBL" id="AJ296146">
    <property type="protein sequence ID" value="CAC13147.1"/>
    <property type="molecule type" value="Genomic_DNA"/>
</dbReference>
<dbReference type="SMR" id="Q9F487"/>
<dbReference type="GO" id="GO:0009522">
    <property type="term" value="C:photosystem I"/>
    <property type="evidence" value="ECO:0007669"/>
    <property type="project" value="UniProtKB-KW"/>
</dbReference>
<dbReference type="GO" id="GO:0009523">
    <property type="term" value="C:photosystem II"/>
    <property type="evidence" value="ECO:0007669"/>
    <property type="project" value="UniProtKB-KW"/>
</dbReference>
<dbReference type="GO" id="GO:0031676">
    <property type="term" value="C:plasma membrane-derived thylakoid membrane"/>
    <property type="evidence" value="ECO:0007669"/>
    <property type="project" value="UniProtKB-SubCell"/>
</dbReference>
<dbReference type="GO" id="GO:0016168">
    <property type="term" value="F:chlorophyll binding"/>
    <property type="evidence" value="ECO:0007669"/>
    <property type="project" value="UniProtKB-KW"/>
</dbReference>
<dbReference type="GO" id="GO:0009767">
    <property type="term" value="P:photosynthetic electron transport chain"/>
    <property type="evidence" value="ECO:0007669"/>
    <property type="project" value="InterPro"/>
</dbReference>
<dbReference type="InterPro" id="IPR000932">
    <property type="entry name" value="PS_antenna-like"/>
</dbReference>
<dbReference type="InterPro" id="IPR036001">
    <property type="entry name" value="PS_II_antenna-like_sf"/>
</dbReference>
<dbReference type="Pfam" id="PF00421">
    <property type="entry name" value="PSII"/>
    <property type="match status" value="1"/>
</dbReference>
<dbReference type="SUPFAM" id="SSF161077">
    <property type="entry name" value="Photosystem II antenna protein-like"/>
    <property type="match status" value="1"/>
</dbReference>
<accession>Q9F487</accession>
<gene>
    <name type="primary">pcb</name>
    <name type="synonym">pcbC</name>
</gene>
<reference key="1">
    <citation type="journal article" date="2001" name="FEMS Microbiol. Lett.">
        <title>The iron-regulated isiA gene of Fischerella muscicola strain PCC 73103 is linked to a likewise regulated gene encoding a Pcb-like chlorophyll-binding protein.</title>
        <authorList>
            <person name="Geiss U."/>
            <person name="Vinnemeier J."/>
            <person name="Schoor A."/>
            <person name="Hagemann M."/>
        </authorList>
    </citation>
    <scope>NUCLEOTIDE SEQUENCE [GENOMIC DNA]</scope>
    <scope>INDUCTION</scope>
    <source>
        <strain>ATCC 29114 / PCC 73103 / SAG 1427-1 / UTEX 1301</strain>
    </source>
</reference>
<comment type="function">
    <text evidence="2">The antenna complex functions as a light receptor, it captures and delivers excitation energy to photosystems II and I. The pcb genes are not related to higher plant LHCs.</text>
</comment>
<comment type="cofactor">
    <cofactor evidence="2">
        <name>chlorophyll a</name>
        <dbReference type="ChEBI" id="CHEBI:58416"/>
    </cofactor>
    <text evidence="2">Chlorophyll a.</text>
</comment>
<comment type="cofactor">
    <cofactor evidence="2">
        <name>chlorophyll b</name>
        <dbReference type="ChEBI" id="CHEBI:61721"/>
    </cofactor>
    <text evidence="2">Chlorophyll b.</text>
</comment>
<comment type="subunit">
    <text evidence="2">The antenna complex consists of chlorophylls (a and b) and chlorophyll a/b binding proteins.</text>
</comment>
<comment type="subcellular location">
    <subcellularLocation>
        <location evidence="2">Cellular thylakoid membrane</location>
        <topology evidence="1">Multi-pass membrane protein</topology>
    </subcellularLocation>
</comment>
<comment type="induction">
    <text evidence="4">By iron stress.</text>
</comment>
<comment type="similarity">
    <text evidence="5">Belongs to the PsbB/PsbC family. IsiA/Pcb subfamily.</text>
</comment>
<sequence length="324" mass="35628">MAISTDKTFAANTNSPWLIGNARLIDLSGQLLGAHIAHAGLIMFWAGSITISEVTRFVPGIPMYEQQMTLLPHLATLGWGVGAGGEVINTYPYFVIGILHLVASAVLGAGGLFHVFRSPAILYNSGGQVAKFHYEWNDPKKLGLILGHHLIILGFGAFLLVLKAMFFGGIYDTHIENVRLITNPTFDPMTIFSYLVGIKDSHWTLLGIASVDNLEDVIGGHIWIGSILILGGIWHILVPPFAWVRQILPIVNGEEILSYSLLGLALMAFISAVFVGYNDTVFPKEFYGENRIVIATIQWVLGILALVGYFWHSWRSRELNSNLS</sequence>
<keyword id="KW-0148">Chlorophyll</keyword>
<keyword id="KW-0157">Chromophore</keyword>
<keyword id="KW-0472">Membrane</keyword>
<keyword id="KW-0602">Photosynthesis</keyword>
<keyword id="KW-0603">Photosystem I</keyword>
<keyword id="KW-0604">Photosystem II</keyword>
<keyword id="KW-0346">Stress response</keyword>
<keyword id="KW-0793">Thylakoid</keyword>
<keyword id="KW-0812">Transmembrane</keyword>
<keyword id="KW-1133">Transmembrane helix</keyword>
<feature type="chain" id="PRO_0000077533" description="Chlorophyll a/b light-harvesting protein Pcb">
    <location>
        <begin position="1"/>
        <end position="324"/>
    </location>
</feature>
<feature type="transmembrane region" description="Helical" evidence="3">
    <location>
        <begin position="31"/>
        <end position="51"/>
    </location>
</feature>
<feature type="transmembrane region" description="Helical" evidence="3">
    <location>
        <begin position="68"/>
        <end position="88"/>
    </location>
</feature>
<feature type="transmembrane region" description="Helical" evidence="3">
    <location>
        <begin position="93"/>
        <end position="113"/>
    </location>
</feature>
<feature type="transmembrane region" description="Helical" evidence="3">
    <location>
        <begin position="222"/>
        <end position="242"/>
    </location>
</feature>
<feature type="transmembrane region" description="Helical" evidence="3">
    <location>
        <begin position="256"/>
        <end position="276"/>
    </location>
</feature>
<feature type="transmembrane region" description="Helical" evidence="3">
    <location>
        <begin position="292"/>
        <end position="312"/>
    </location>
</feature>
<protein>
    <recommendedName>
        <fullName>Chlorophyll a/b light-harvesting protein Pcb</fullName>
    </recommendedName>
</protein>
<proteinExistence type="evidence at transcript level"/>
<evidence type="ECO:0000250" key="1"/>
<evidence type="ECO:0000250" key="2">
    <source>
        <dbReference type="UniProtKB" id="Q6Q972"/>
    </source>
</evidence>
<evidence type="ECO:0000255" key="3"/>
<evidence type="ECO:0000269" key="4">
    <source>
    </source>
</evidence>
<evidence type="ECO:0000305" key="5"/>
<name>PCB_FISMU</name>